<keyword id="KW-0067">ATP-binding</keyword>
<keyword id="KW-0963">Cytoplasm</keyword>
<keyword id="KW-0418">Kinase</keyword>
<keyword id="KW-0547">Nucleotide-binding</keyword>
<keyword id="KW-0597">Phosphoprotein</keyword>
<keyword id="KW-1185">Reference proteome</keyword>
<keyword id="KW-0723">Serine/threonine-protein kinase</keyword>
<keyword id="KW-0808">Transferase</keyword>
<evidence type="ECO:0000255" key="1">
    <source>
        <dbReference type="PROSITE-ProRule" id="PRU00159"/>
    </source>
</evidence>
<evidence type="ECO:0000255" key="2">
    <source>
        <dbReference type="PROSITE-ProRule" id="PRU10027"/>
    </source>
</evidence>
<evidence type="ECO:0000256" key="3">
    <source>
        <dbReference type="SAM" id="MobiDB-lite"/>
    </source>
</evidence>
<evidence type="ECO:0000269" key="4">
    <source>
    </source>
</evidence>
<evidence type="ECO:0000269" key="5">
    <source>
    </source>
</evidence>
<name>PPK30_SCHPO</name>
<dbReference type="EC" id="2.7.11.1"/>
<dbReference type="EMBL" id="CU329671">
    <property type="protein sequence ID" value="CAA17045.1"/>
    <property type="molecule type" value="Genomic_DNA"/>
</dbReference>
<dbReference type="PIR" id="T40643">
    <property type="entry name" value="T40643"/>
</dbReference>
<dbReference type="RefSeq" id="NP_596081.1">
    <property type="nucleotide sequence ID" value="NM_001021995.2"/>
</dbReference>
<dbReference type="SMR" id="O43066"/>
<dbReference type="BioGRID" id="277624">
    <property type="interactions" value="43"/>
</dbReference>
<dbReference type="FunCoup" id="O43066">
    <property type="interactions" value="408"/>
</dbReference>
<dbReference type="STRING" id="284812.O43066"/>
<dbReference type="iPTMnet" id="O43066"/>
<dbReference type="PaxDb" id="4896-SPBC6B1.02.1"/>
<dbReference type="EnsemblFungi" id="SPBC6B1.02.1">
    <property type="protein sequence ID" value="SPBC6B1.02.1:pep"/>
    <property type="gene ID" value="SPBC6B1.02"/>
</dbReference>
<dbReference type="GeneID" id="2541109"/>
<dbReference type="KEGG" id="spo:2541109"/>
<dbReference type="PomBase" id="SPBC6B1.02">
    <property type="gene designation" value="ppk30"/>
</dbReference>
<dbReference type="VEuPathDB" id="FungiDB:SPBC6B1.02"/>
<dbReference type="eggNOG" id="KOG1989">
    <property type="taxonomic scope" value="Eukaryota"/>
</dbReference>
<dbReference type="HOGENOM" id="CLU_011638_2_0_1"/>
<dbReference type="InParanoid" id="O43066"/>
<dbReference type="OMA" id="HRHIVNY"/>
<dbReference type="PhylomeDB" id="O43066"/>
<dbReference type="PRO" id="PR:O43066"/>
<dbReference type="Proteomes" id="UP000002485">
    <property type="component" value="Chromosome II"/>
</dbReference>
<dbReference type="GO" id="GO:0030479">
    <property type="term" value="C:actin cortical patch"/>
    <property type="evidence" value="ECO:0000266"/>
    <property type="project" value="PomBase"/>
</dbReference>
<dbReference type="GO" id="GO:0005737">
    <property type="term" value="C:cytoplasm"/>
    <property type="evidence" value="ECO:0007005"/>
    <property type="project" value="PomBase"/>
</dbReference>
<dbReference type="GO" id="GO:0005524">
    <property type="term" value="F:ATP binding"/>
    <property type="evidence" value="ECO:0000255"/>
    <property type="project" value="PomBase"/>
</dbReference>
<dbReference type="GO" id="GO:0106310">
    <property type="term" value="F:protein serine kinase activity"/>
    <property type="evidence" value="ECO:0007669"/>
    <property type="project" value="RHEA"/>
</dbReference>
<dbReference type="GO" id="GO:0004674">
    <property type="term" value="F:protein serine/threonine kinase activity"/>
    <property type="evidence" value="ECO:0000318"/>
    <property type="project" value="GO_Central"/>
</dbReference>
<dbReference type="GO" id="GO:0000147">
    <property type="term" value="P:actin cortical patch assembly"/>
    <property type="evidence" value="ECO:0000318"/>
    <property type="project" value="GO_Central"/>
</dbReference>
<dbReference type="GO" id="GO:0007015">
    <property type="term" value="P:actin filament organization"/>
    <property type="evidence" value="ECO:0000318"/>
    <property type="project" value="GO_Central"/>
</dbReference>
<dbReference type="GO" id="GO:2000369">
    <property type="term" value="P:regulation of clathrin-dependent endocytosis"/>
    <property type="evidence" value="ECO:0000266"/>
    <property type="project" value="PomBase"/>
</dbReference>
<dbReference type="GO" id="GO:0023052">
    <property type="term" value="P:signaling"/>
    <property type="evidence" value="ECO:0000305"/>
    <property type="project" value="PomBase"/>
</dbReference>
<dbReference type="CDD" id="cd14037">
    <property type="entry name" value="STKc_NAK_like"/>
    <property type="match status" value="1"/>
</dbReference>
<dbReference type="FunFam" id="1.10.510.10:FF:000441">
    <property type="entry name" value="Serine/threonine protein kinase"/>
    <property type="match status" value="1"/>
</dbReference>
<dbReference type="Gene3D" id="1.10.510.10">
    <property type="entry name" value="Transferase(Phosphotransferase) domain 1"/>
    <property type="match status" value="1"/>
</dbReference>
<dbReference type="InterPro" id="IPR011009">
    <property type="entry name" value="Kinase-like_dom_sf"/>
</dbReference>
<dbReference type="InterPro" id="IPR000719">
    <property type="entry name" value="Prot_kinase_dom"/>
</dbReference>
<dbReference type="InterPro" id="IPR008271">
    <property type="entry name" value="Ser/Thr_kinase_AS"/>
</dbReference>
<dbReference type="PANTHER" id="PTHR22967:SF57">
    <property type="entry name" value="AUXILIN, ISOFORM A-RELATED"/>
    <property type="match status" value="1"/>
</dbReference>
<dbReference type="PANTHER" id="PTHR22967">
    <property type="entry name" value="SERINE/THREONINE PROTEIN KINASE"/>
    <property type="match status" value="1"/>
</dbReference>
<dbReference type="Pfam" id="PF00069">
    <property type="entry name" value="Pkinase"/>
    <property type="match status" value="1"/>
</dbReference>
<dbReference type="SMART" id="SM00220">
    <property type="entry name" value="S_TKc"/>
    <property type="match status" value="1"/>
</dbReference>
<dbReference type="SUPFAM" id="SSF56112">
    <property type="entry name" value="Protein kinase-like (PK-like)"/>
    <property type="match status" value="1"/>
</dbReference>
<dbReference type="PROSITE" id="PS50011">
    <property type="entry name" value="PROTEIN_KINASE_DOM"/>
    <property type="match status" value="1"/>
</dbReference>
<dbReference type="PROSITE" id="PS00108">
    <property type="entry name" value="PROTEIN_KINASE_ST"/>
    <property type="match status" value="1"/>
</dbReference>
<protein>
    <recommendedName>
        <fullName>Serine/threonine-protein kinase ppk30</fullName>
        <ecNumber>2.7.11.1</ecNumber>
    </recommendedName>
</protein>
<sequence>MTEVYSKAPATVGQVKLSNNGTSNKAYSVPKSPAPVRTDLFSKIPAGTKIQVGSHSVIIQRYLSEGGFSHVYLALLENEKPFVLKRIYVPDKTALQLVHGEIETMKRLKGHRHIVNYIDSSALYSKSENRYEVYLLMEFCAGGGLIDFMNTRLQHRLTEGEILKILADVCDAVAAMHYLDPPLIHRDLKIENVLLVAPNSYKLCDFGSACEPLAPATTPDTIMFLEQNIAAYTTPQYRAPEMIDINRRQGIDEKSDIWAIGVLAYKLCYYTTPFEQVGNSAILKASFSFPPFPRYSDRMKRFIATCLQEQPSHRPNIYQTLKEIMEMQGTPLKLPDVYGGVNASTYNPPRAPLQRTPSGSLTPLSSRPAHTSLPPIPTVQTTSSNVPPVNRPSLKSKSPSVSNILSNQLSPISSANNDVMARLQPKSPIPATKSYSATIQTPRSPSLRRADSTSHIIKVPHLPDTSVKTAKTGASEIDVLSRYPSVEEIDKITDKIEVSKPLRNSGPLAFKPFEKISANKQTDLLQNKPEALLDLENRFLPKPSPKPSEFSSSVGSKQNLSMDIPSVQNVSTKQKSTNDTDNSKLKINKPLTGGYAPLPSRPNRMNHSVLNEKSNKEFVRGPRVLPPIEVSSSKMAGLDIRKEPFTPAVPSAKSGLKKDQSSEVANKDVVSKNKDNIAILADREARPQLLLDDNNDSSSSSSEHLISFNNHTGNKILSRQTTSSSIDSNNVQSNIEFLKGLNATHARSTSQVSHTQRLQQSISTSLERVKSNTKKESNSPRQVSKLKRPIGASNKILSGKFGEAFKKFEFGGEKMSRRRKSETKKNLVSILPDTEVDEYPKASNEWIVESEELPQVHETINQYRKSCETQRSRKSHEGSNDLERQPSSPDTVHPGIKRSHFIRERVKQLLSDANKHHQSPSDSETDRTPDSSSIHLPHIERLNLFHTKSESLE</sequence>
<accession>O43066</accession>
<organism>
    <name type="scientific">Schizosaccharomyces pombe (strain 972 / ATCC 24843)</name>
    <name type="common">Fission yeast</name>
    <dbReference type="NCBI Taxonomy" id="284812"/>
    <lineage>
        <taxon>Eukaryota</taxon>
        <taxon>Fungi</taxon>
        <taxon>Dikarya</taxon>
        <taxon>Ascomycota</taxon>
        <taxon>Taphrinomycotina</taxon>
        <taxon>Schizosaccharomycetes</taxon>
        <taxon>Schizosaccharomycetales</taxon>
        <taxon>Schizosaccharomycetaceae</taxon>
        <taxon>Schizosaccharomyces</taxon>
    </lineage>
</organism>
<reference key="1">
    <citation type="journal article" date="2002" name="Nature">
        <title>The genome sequence of Schizosaccharomyces pombe.</title>
        <authorList>
            <person name="Wood V."/>
            <person name="Gwilliam R."/>
            <person name="Rajandream M.A."/>
            <person name="Lyne M.H."/>
            <person name="Lyne R."/>
            <person name="Stewart A."/>
            <person name="Sgouros J.G."/>
            <person name="Peat N."/>
            <person name="Hayles J."/>
            <person name="Baker S.G."/>
            <person name="Basham D."/>
            <person name="Bowman S."/>
            <person name="Brooks K."/>
            <person name="Brown D."/>
            <person name="Brown S."/>
            <person name="Chillingworth T."/>
            <person name="Churcher C.M."/>
            <person name="Collins M."/>
            <person name="Connor R."/>
            <person name="Cronin A."/>
            <person name="Davis P."/>
            <person name="Feltwell T."/>
            <person name="Fraser A."/>
            <person name="Gentles S."/>
            <person name="Goble A."/>
            <person name="Hamlin N."/>
            <person name="Harris D.E."/>
            <person name="Hidalgo J."/>
            <person name="Hodgson G."/>
            <person name="Holroyd S."/>
            <person name="Hornsby T."/>
            <person name="Howarth S."/>
            <person name="Huckle E.J."/>
            <person name="Hunt S."/>
            <person name="Jagels K."/>
            <person name="James K.D."/>
            <person name="Jones L."/>
            <person name="Jones M."/>
            <person name="Leather S."/>
            <person name="McDonald S."/>
            <person name="McLean J."/>
            <person name="Mooney P."/>
            <person name="Moule S."/>
            <person name="Mungall K.L."/>
            <person name="Murphy L.D."/>
            <person name="Niblett D."/>
            <person name="Odell C."/>
            <person name="Oliver K."/>
            <person name="O'Neil S."/>
            <person name="Pearson D."/>
            <person name="Quail M.A."/>
            <person name="Rabbinowitsch E."/>
            <person name="Rutherford K.M."/>
            <person name="Rutter S."/>
            <person name="Saunders D."/>
            <person name="Seeger K."/>
            <person name="Sharp S."/>
            <person name="Skelton J."/>
            <person name="Simmonds M.N."/>
            <person name="Squares R."/>
            <person name="Squares S."/>
            <person name="Stevens K."/>
            <person name="Taylor K."/>
            <person name="Taylor R.G."/>
            <person name="Tivey A."/>
            <person name="Walsh S.V."/>
            <person name="Warren T."/>
            <person name="Whitehead S."/>
            <person name="Woodward J.R."/>
            <person name="Volckaert G."/>
            <person name="Aert R."/>
            <person name="Robben J."/>
            <person name="Grymonprez B."/>
            <person name="Weltjens I."/>
            <person name="Vanstreels E."/>
            <person name="Rieger M."/>
            <person name="Schaefer M."/>
            <person name="Mueller-Auer S."/>
            <person name="Gabel C."/>
            <person name="Fuchs M."/>
            <person name="Duesterhoeft A."/>
            <person name="Fritzc C."/>
            <person name="Holzer E."/>
            <person name="Moestl D."/>
            <person name="Hilbert H."/>
            <person name="Borzym K."/>
            <person name="Langer I."/>
            <person name="Beck A."/>
            <person name="Lehrach H."/>
            <person name="Reinhardt R."/>
            <person name="Pohl T.M."/>
            <person name="Eger P."/>
            <person name="Zimmermann W."/>
            <person name="Wedler H."/>
            <person name="Wambutt R."/>
            <person name="Purnelle B."/>
            <person name="Goffeau A."/>
            <person name="Cadieu E."/>
            <person name="Dreano S."/>
            <person name="Gloux S."/>
            <person name="Lelaure V."/>
            <person name="Mottier S."/>
            <person name="Galibert F."/>
            <person name="Aves S.J."/>
            <person name="Xiang Z."/>
            <person name="Hunt C."/>
            <person name="Moore K."/>
            <person name="Hurst S.M."/>
            <person name="Lucas M."/>
            <person name="Rochet M."/>
            <person name="Gaillardin C."/>
            <person name="Tallada V.A."/>
            <person name="Garzon A."/>
            <person name="Thode G."/>
            <person name="Daga R.R."/>
            <person name="Cruzado L."/>
            <person name="Jimenez J."/>
            <person name="Sanchez M."/>
            <person name="del Rey F."/>
            <person name="Benito J."/>
            <person name="Dominguez A."/>
            <person name="Revuelta J.L."/>
            <person name="Moreno S."/>
            <person name="Armstrong J."/>
            <person name="Forsburg S.L."/>
            <person name="Cerutti L."/>
            <person name="Lowe T."/>
            <person name="McCombie W.R."/>
            <person name="Paulsen I."/>
            <person name="Potashkin J."/>
            <person name="Shpakovski G.V."/>
            <person name="Ussery D."/>
            <person name="Barrell B.G."/>
            <person name="Nurse P."/>
        </authorList>
    </citation>
    <scope>NUCLEOTIDE SEQUENCE [LARGE SCALE GENOMIC DNA]</scope>
    <source>
        <strain>972 / ATCC 24843</strain>
    </source>
</reference>
<reference key="2">
    <citation type="journal article" date="2005" name="Eukaryot. Cell">
        <title>Systematic deletion analysis of fission yeast protein kinases.</title>
        <authorList>
            <person name="Bimbo A."/>
            <person name="Jia Y."/>
            <person name="Poh S.L."/>
            <person name="Karuturi R.K.M."/>
            <person name="den Elzen N."/>
            <person name="Peng X."/>
            <person name="Zheng L."/>
            <person name="O'Connell M."/>
            <person name="Liu E.T."/>
            <person name="Balasubramanian M.K."/>
            <person name="Liu J."/>
        </authorList>
    </citation>
    <scope>IDENTIFICATION</scope>
</reference>
<reference key="3">
    <citation type="journal article" date="2006" name="Nat. Biotechnol.">
        <title>ORFeome cloning and global analysis of protein localization in the fission yeast Schizosaccharomyces pombe.</title>
        <authorList>
            <person name="Matsuyama A."/>
            <person name="Arai R."/>
            <person name="Yashiroda Y."/>
            <person name="Shirai A."/>
            <person name="Kamata A."/>
            <person name="Sekido S."/>
            <person name="Kobayashi Y."/>
            <person name="Hashimoto A."/>
            <person name="Hamamoto M."/>
            <person name="Hiraoka Y."/>
            <person name="Horinouchi S."/>
            <person name="Yoshida M."/>
        </authorList>
    </citation>
    <scope>SUBCELLULAR LOCATION [LARGE SCALE ANALYSIS]</scope>
</reference>
<reference key="4">
    <citation type="journal article" date="2008" name="J. Proteome Res.">
        <title>Phosphoproteome analysis of fission yeast.</title>
        <authorList>
            <person name="Wilson-Grady J.T."/>
            <person name="Villen J."/>
            <person name="Gygi S.P."/>
        </authorList>
    </citation>
    <scope>PHOSPHORYLATION [LARGE SCALE ANALYSIS] AT SER-872 AND SER-875</scope>
    <scope>IDENTIFICATION BY MASS SPECTROMETRY</scope>
</reference>
<gene>
    <name type="primary">ppk30</name>
    <name type="ORF">SPBC6B1.02</name>
</gene>
<comment type="catalytic activity">
    <reaction>
        <text>L-seryl-[protein] + ATP = O-phospho-L-seryl-[protein] + ADP + H(+)</text>
        <dbReference type="Rhea" id="RHEA:17989"/>
        <dbReference type="Rhea" id="RHEA-COMP:9863"/>
        <dbReference type="Rhea" id="RHEA-COMP:11604"/>
        <dbReference type="ChEBI" id="CHEBI:15378"/>
        <dbReference type="ChEBI" id="CHEBI:29999"/>
        <dbReference type="ChEBI" id="CHEBI:30616"/>
        <dbReference type="ChEBI" id="CHEBI:83421"/>
        <dbReference type="ChEBI" id="CHEBI:456216"/>
        <dbReference type="EC" id="2.7.11.1"/>
    </reaction>
</comment>
<comment type="catalytic activity">
    <reaction>
        <text>L-threonyl-[protein] + ATP = O-phospho-L-threonyl-[protein] + ADP + H(+)</text>
        <dbReference type="Rhea" id="RHEA:46608"/>
        <dbReference type="Rhea" id="RHEA-COMP:11060"/>
        <dbReference type="Rhea" id="RHEA-COMP:11605"/>
        <dbReference type="ChEBI" id="CHEBI:15378"/>
        <dbReference type="ChEBI" id="CHEBI:30013"/>
        <dbReference type="ChEBI" id="CHEBI:30616"/>
        <dbReference type="ChEBI" id="CHEBI:61977"/>
        <dbReference type="ChEBI" id="CHEBI:456216"/>
        <dbReference type="EC" id="2.7.11.1"/>
    </reaction>
</comment>
<comment type="subcellular location">
    <subcellularLocation>
        <location evidence="4">Cytoplasm</location>
    </subcellularLocation>
</comment>
<comment type="similarity">
    <text evidence="1">Belongs to the protein kinase superfamily. Ser/Thr protein kinase family.</text>
</comment>
<feature type="chain" id="PRO_0000256827" description="Serine/threonine-protein kinase ppk30">
    <location>
        <begin position="1"/>
        <end position="953"/>
    </location>
</feature>
<feature type="domain" description="Protein kinase" evidence="1">
    <location>
        <begin position="57"/>
        <end position="326"/>
    </location>
</feature>
<feature type="region of interest" description="Disordered" evidence="3">
    <location>
        <begin position="343"/>
        <end position="402"/>
    </location>
</feature>
<feature type="region of interest" description="Disordered" evidence="3">
    <location>
        <begin position="427"/>
        <end position="451"/>
    </location>
</feature>
<feature type="region of interest" description="Disordered" evidence="3">
    <location>
        <begin position="538"/>
        <end position="606"/>
    </location>
</feature>
<feature type="region of interest" description="Disordered" evidence="3">
    <location>
        <begin position="641"/>
        <end position="669"/>
    </location>
</feature>
<feature type="region of interest" description="Disordered" evidence="3">
    <location>
        <begin position="748"/>
        <end position="791"/>
    </location>
</feature>
<feature type="region of interest" description="Disordered" evidence="3">
    <location>
        <begin position="864"/>
        <end position="953"/>
    </location>
</feature>
<feature type="compositionally biased region" description="Polar residues" evidence="3">
    <location>
        <begin position="355"/>
        <end position="369"/>
    </location>
</feature>
<feature type="compositionally biased region" description="Polar residues" evidence="3">
    <location>
        <begin position="378"/>
        <end position="402"/>
    </location>
</feature>
<feature type="compositionally biased region" description="Polar residues" evidence="3">
    <location>
        <begin position="433"/>
        <end position="444"/>
    </location>
</feature>
<feature type="compositionally biased region" description="Low complexity" evidence="3">
    <location>
        <begin position="547"/>
        <end position="557"/>
    </location>
</feature>
<feature type="compositionally biased region" description="Polar residues" evidence="3">
    <location>
        <begin position="558"/>
        <end position="575"/>
    </location>
</feature>
<feature type="compositionally biased region" description="Basic and acidic residues" evidence="3">
    <location>
        <begin position="656"/>
        <end position="669"/>
    </location>
</feature>
<feature type="compositionally biased region" description="Polar residues" evidence="3">
    <location>
        <begin position="748"/>
        <end position="766"/>
    </location>
</feature>
<feature type="compositionally biased region" description="Basic and acidic residues" evidence="3">
    <location>
        <begin position="767"/>
        <end position="778"/>
    </location>
</feature>
<feature type="compositionally biased region" description="Basic and acidic residues" evidence="3">
    <location>
        <begin position="865"/>
        <end position="884"/>
    </location>
</feature>
<feature type="compositionally biased region" description="Basic and acidic residues" evidence="3">
    <location>
        <begin position="937"/>
        <end position="953"/>
    </location>
</feature>
<feature type="active site" description="Proton acceptor" evidence="1 2">
    <location>
        <position position="187"/>
    </location>
</feature>
<feature type="binding site" evidence="1">
    <location>
        <begin position="63"/>
        <end position="71"/>
    </location>
    <ligand>
        <name>ATP</name>
        <dbReference type="ChEBI" id="CHEBI:30616"/>
    </ligand>
</feature>
<feature type="binding site" evidence="1">
    <location>
        <position position="85"/>
    </location>
    <ligand>
        <name>ATP</name>
        <dbReference type="ChEBI" id="CHEBI:30616"/>
    </ligand>
</feature>
<feature type="modified residue" description="Phosphoserine" evidence="5">
    <location>
        <position position="872"/>
    </location>
</feature>
<feature type="modified residue" description="Phosphoserine" evidence="5">
    <location>
        <position position="875"/>
    </location>
</feature>
<proteinExistence type="evidence at protein level"/>